<organism>
    <name type="scientific">Vibrio cholerae serotype O1 (strain ATCC 39315 / El Tor Inaba N16961)</name>
    <dbReference type="NCBI Taxonomy" id="243277"/>
    <lineage>
        <taxon>Bacteria</taxon>
        <taxon>Pseudomonadati</taxon>
        <taxon>Pseudomonadota</taxon>
        <taxon>Gammaproteobacteria</taxon>
        <taxon>Vibrionales</taxon>
        <taxon>Vibrionaceae</taxon>
        <taxon>Vibrio</taxon>
    </lineage>
</organism>
<feature type="chain" id="PRO_0000203505" description="Uncharacterized protein VC_1460">
    <location>
        <begin position="1"/>
        <end position="395"/>
    </location>
</feature>
<feature type="region of interest" description="Disordered" evidence="1">
    <location>
        <begin position="247"/>
        <end position="270"/>
    </location>
</feature>
<feature type="compositionally biased region" description="Pro residues" evidence="1">
    <location>
        <begin position="252"/>
        <end position="265"/>
    </location>
</feature>
<feature type="sequence conflict" description="In Ref. 2; AAF29545." evidence="2" ref="2">
    <original>E</original>
    <variation>A</variation>
    <location>
        <position position="306"/>
    </location>
</feature>
<gene>
    <name type="ordered locus">VC_1460</name>
</gene>
<accession>P38443</accession>
<accession>Q9KS09</accession>
<accession>Q9L7Q7</accession>
<proteinExistence type="predicted"/>
<protein>
    <recommendedName>
        <fullName>Uncharacterized protein VC_1460</fullName>
    </recommendedName>
    <alternativeName>
        <fullName>OrfU</fullName>
    </alternativeName>
</protein>
<name>Y1460_VIBCH</name>
<evidence type="ECO:0000256" key="1">
    <source>
        <dbReference type="SAM" id="MobiDB-lite"/>
    </source>
</evidence>
<evidence type="ECO:0000305" key="2"/>
<dbReference type="EMBL" id="Z22569">
    <property type="protein sequence ID" value="CAA80291.1"/>
    <property type="molecule type" value="Genomic_DNA"/>
</dbReference>
<dbReference type="EMBL" id="AF220606">
    <property type="protein sequence ID" value="AAF29545.1"/>
    <property type="molecule type" value="Genomic_DNA"/>
</dbReference>
<dbReference type="EMBL" id="AE003852">
    <property type="protein sequence ID" value="AAF94617.1"/>
    <property type="status" value="ALT_INIT"/>
    <property type="molecule type" value="Genomic_DNA"/>
</dbReference>
<dbReference type="PIR" id="D82197">
    <property type="entry name" value="D82197"/>
</dbReference>
<dbReference type="PIR" id="S36029">
    <property type="entry name" value="S36029"/>
</dbReference>
<dbReference type="RefSeq" id="NP_231103.1">
    <property type="nucleotide sequence ID" value="NC_002505.1"/>
</dbReference>
<dbReference type="RefSeq" id="WP_001268534.1">
    <property type="nucleotide sequence ID" value="NZ_LT906614.1"/>
</dbReference>
<dbReference type="SMR" id="P38443"/>
<dbReference type="STRING" id="243277.VC_1460"/>
<dbReference type="DNASU" id="2613966"/>
<dbReference type="EnsemblBacteria" id="AAF94617">
    <property type="protein sequence ID" value="AAF94617"/>
    <property type="gene ID" value="VC_1460"/>
</dbReference>
<dbReference type="KEGG" id="vch:VC_1460"/>
<dbReference type="PATRIC" id="fig|243277.26.peg.1390"/>
<dbReference type="eggNOG" id="ENOG50308DC">
    <property type="taxonomic scope" value="Bacteria"/>
</dbReference>
<dbReference type="HOGENOM" id="CLU_698180_0_0_6"/>
<dbReference type="Proteomes" id="UP000000584">
    <property type="component" value="Chromosome 1"/>
</dbReference>
<dbReference type="Gene3D" id="2.40.30.280">
    <property type="entry name" value="Vibrio phage CTXphi pIII, N-terminal N1 domain"/>
    <property type="match status" value="1"/>
</dbReference>
<dbReference type="InterPro" id="IPR032014">
    <property type="entry name" value="CTXphi_pIII-N1"/>
</dbReference>
<dbReference type="InterPro" id="IPR038618">
    <property type="entry name" value="CTXphi_pIII_N1_sf"/>
</dbReference>
<dbReference type="Pfam" id="PF16710">
    <property type="entry name" value="CTXphi_pIII-N1"/>
    <property type="match status" value="1"/>
</dbReference>
<comment type="sequence caution" evidence="2">
    <conflict type="erroneous initiation">
        <sequence resource="EMBL-CDS" id="AAF94617"/>
    </conflict>
</comment>
<reference key="1">
    <citation type="journal article" date="1993" name="Proc. Natl. Acad. Sci. U.S.A.">
        <title>Accessory cholera enterotoxin (Ace), the third toxin of a Vibrio cholerae virulence cassette.</title>
        <authorList>
            <person name="Trucksis M."/>
            <person name="Galen J.E."/>
            <person name="Michalski J."/>
            <person name="Fasano A."/>
            <person name="Kaper J.B."/>
        </authorList>
    </citation>
    <scope>NUCLEOTIDE SEQUENCE [GENOMIC DNA]</scope>
    <source>
        <strain>ATCC 55056 / El Tor Ogawa E7946</strain>
    </source>
</reference>
<reference key="2">
    <citation type="submission" date="2000-01" db="EMBL/GenBank/DDBJ databases">
        <title>Vibrio cholerae nct-CTXphi whole genome, include rstR(RstR), rstA(RstA), rstB(RstB), cep(Cep), orfU(OrfU), ace(Ace) and zot(Zot) genes.</title>
        <authorList>
            <person name="Kan B."/>
            <person name="Liu Y.Q."/>
            <person name="Qi G.M."/>
            <person name="Gao S.Y."/>
        </authorList>
    </citation>
    <scope>NUCLEOTIDE SEQUENCE [GENOMIC DNA]</scope>
    <source>
        <strain>El Tor 86015 / Serotype O1</strain>
    </source>
</reference>
<reference key="3">
    <citation type="journal article" date="2000" name="Nature">
        <title>DNA sequence of both chromosomes of the cholera pathogen Vibrio cholerae.</title>
        <authorList>
            <person name="Heidelberg J.F."/>
            <person name="Eisen J.A."/>
            <person name="Nelson W.C."/>
            <person name="Clayton R.A."/>
            <person name="Gwinn M.L."/>
            <person name="Dodson R.J."/>
            <person name="Haft D.H."/>
            <person name="Hickey E.K."/>
            <person name="Peterson J.D."/>
            <person name="Umayam L.A."/>
            <person name="Gill S.R."/>
            <person name="Nelson K.E."/>
            <person name="Read T.D."/>
            <person name="Tettelin H."/>
            <person name="Richardson D.L."/>
            <person name="Ermolaeva M.D."/>
            <person name="Vamathevan J.J."/>
            <person name="Bass S."/>
            <person name="Qin H."/>
            <person name="Dragoi I."/>
            <person name="Sellers P."/>
            <person name="McDonald L.A."/>
            <person name="Utterback T.R."/>
            <person name="Fleischmann R.D."/>
            <person name="Nierman W.C."/>
            <person name="White O."/>
            <person name="Salzberg S.L."/>
            <person name="Smith H.O."/>
            <person name="Colwell R.R."/>
            <person name="Mekalanos J.J."/>
            <person name="Venter J.C."/>
            <person name="Fraser C.M."/>
        </authorList>
    </citation>
    <scope>NUCLEOTIDE SEQUENCE [LARGE SCALE GENOMIC DNA]</scope>
    <source>
        <strain>ATCC 39315 / El Tor Inaba N16961</strain>
    </source>
</reference>
<sequence>MRYFLLFLTLLFLSPSVTASAINCDPNTTTSHQLLFGFGSPIVQSVLFDGCMLDIEKDDYGFVWSCLSNENGDYCKGLYKPRFSQGVSPNWPMCDLSGASAERCIYPYCPEGEECVPLPPSPPSDSPVDGLSSSFKSAFNQVYKNQSEMASTLNHVSGQVSHSQDMVQLNTKFHADRVLESVTAVNNRLGGQMEYLEEIRIDVWDTQREVRKAKDELYSRVAAVSYDVLYSELNVLRAIDELKDSLGGTVVPPNPDQPNPTPPDSSSPNYTGALNTISKKLNTLETISQQLDTMNTALSGRCSNPERCQFPIREAETELETAQQNLKQMINEKITQSALHQFKGSAAVPSFCSYVEAFGYNLCFDFSLFSENLHIIRMIVLAMAYILAAMLILFR</sequence>
<keyword id="KW-1185">Reference proteome</keyword>